<gene>
    <name evidence="4" type="primary">fogE</name>
    <name type="ORF">EURHEDRAFT_455792</name>
</gene>
<evidence type="ECO:0000250" key="1">
    <source>
        <dbReference type="UniProtKB" id="P04798"/>
    </source>
</evidence>
<evidence type="ECO:0000255" key="2"/>
<evidence type="ECO:0000269" key="3">
    <source>
    </source>
</evidence>
<evidence type="ECO:0000303" key="4">
    <source>
    </source>
</evidence>
<evidence type="ECO:0000305" key="5"/>
<comment type="function">
    <text evidence="3">Cytochrome P450 monooxygenase; part of the gene cluster that mediates the biosynthesis of flavoglaucin and congeners (including aspergin, dihydroauroglaucin and auroglaucin), prenylated salicylaldehyde derivatives carrying a saturated or an unsaturated C-7 side chain (PubMed:32134669). The PKS fogA releases the carboxylic acid (8E,10E,12E)-3,5,7-trihydroxytetradeca-8,10,12-trienoic acid as its product, as well as derivatives with one and two double bonds (PubMed:32134669). FogA is indeed able to reduce the initial triketide, thus being at least partially responsible for the differently saturated heptyl side chains of flavoglaucin congeners (PubMed:32134669). The oxidoreductases fogB, fogC and fogD modify the nascent polyketide in fogA-bound form and, together, fogA, fogB, fogC and fogD are necessary for the formation of the aromatic core and the cyclized PKS products are released as salicyl alcohols (PubMed:32134669). In particular, fogB is responsible for oxidation of a hydroxyl group or reduction of remaining double bond(s) at the C-7 residue whereas fogD is probably involved in the reductive release of the modified PKS products (PubMed:32134669). The cytochrome P450 monooxygenase fogE is then responsible for the hydroxylation at C-3 of the benzene ring (PubMed:32134669). The fogE products are substrates of the prenyltransferase fogH and the prenylated benzyl alcohols are subsequently oxidized by the fogF to produce the final aryl aldehydes flavoglaucin and congeners (PubMed:32134669). The short-chain dehydrogenase fogG does not seem to be involved in the biosynthesis of the prenylated salicylaldehyde derivatives (PubMed:32134669).</text>
</comment>
<comment type="cofactor">
    <cofactor evidence="1">
        <name>heme</name>
        <dbReference type="ChEBI" id="CHEBI:30413"/>
    </cofactor>
</comment>
<comment type="pathway">
    <text evidence="3">Secondary metabolite biosynthesis.</text>
</comment>
<comment type="subcellular location">
    <subcellularLocation>
        <location evidence="2">Membrane</location>
        <topology evidence="2">Single-pass membrane protein</topology>
    </subcellularLocation>
</comment>
<comment type="disruption phenotype">
    <text evidence="3">Leads to the accumulation of the 2-alkyl salicyl alcohols.</text>
</comment>
<comment type="similarity">
    <text evidence="5">Belongs to the cytochrome P450 family.</text>
</comment>
<protein>
    <recommendedName>
        <fullName evidence="4">Cytochrome P450 monooxygenase fogE</fullName>
        <ecNumber evidence="3">1.-.-.-</ecNumber>
    </recommendedName>
    <alternativeName>
        <fullName evidence="4">Flavoglaucin biosynthesis cluster protein E</fullName>
    </alternativeName>
</protein>
<reference key="1">
    <citation type="journal article" date="2014" name="Nat. Commun.">
        <title>Genomic adaptations of the halophilic Dead Sea filamentous fungus Eurotium rubrum.</title>
        <authorList>
            <person name="Kis-Papo T."/>
            <person name="Weig A.R."/>
            <person name="Riley R."/>
            <person name="Persoh D."/>
            <person name="Salamov A."/>
            <person name="Sun H."/>
            <person name="Lipzen A."/>
            <person name="Wasser S.P."/>
            <person name="Rambold G."/>
            <person name="Grigoriev I.V."/>
            <person name="Nevo E."/>
        </authorList>
    </citation>
    <scope>NUCLEOTIDE SEQUENCE [LARGE SCALE GENOMIC DNA]</scope>
    <source>
        <strain>CBS 135680</strain>
    </source>
</reference>
<reference key="2">
    <citation type="journal article" date="2020" name="Org. Lett.">
        <title>Biosynthesis of the prenylated salicylaldehyde flavoglaucin requires temporary reduction to salicyl alcohol for decoration before reoxidation to the final product.</title>
        <authorList>
            <person name="Nies J."/>
            <person name="Ran H."/>
            <person name="Wohlgemuth V."/>
            <person name="Yin W.B."/>
            <person name="Li S.M."/>
        </authorList>
    </citation>
    <scope>FUNCTION</scope>
    <scope>DISRUPTION PHENOTYPE</scope>
    <scope>CATALYTIC ACTIVITY</scope>
    <scope>PATHWAY</scope>
</reference>
<sequence length="538" mass="61824">MITASSAILLVALIAALWRLSLIGQRPKDYPPGPPTLPILGNLHQIPKARRHIQFEKWARQYGPVYSLILGTKVMIVLNTEDAIRELVDKRGAIYASRPESFIAQDTISGGLRILWMHNGETWKMVRKLAHRILNITTARTYVPYQDLETKRMLVDFLEKPDSFIEHMRRFSTSLTTQMTFGFRTTTIHDPRFKESFDIFDESWELVASPVAALMDFFPFLRKIPDFLLPVKREAKKLHQREITLFRDHYFETRRKLQDGTAKPCVCVDLMKLQKEESFSDNLAAYIGGSLLQAGSETTAGVLVGFIQAITIFPSVAKIAQEEIDYICGDRLPDLNDVPDLPYVRACTKETLRWMPGFLLGLPHAATRDDVYLGYRIPNKATILMNVWAVHNNPEQYPNPRTFDPRRYMDHEYYPQTAANTEVTRDHFAFGAGRRRCQGIHIAERSLFLSISRLLWAFDFKRAVDPVTKLEIFPSMDDLSDGAFTQPNTFPARIVPRSEEKARRVGEEWGKVLELLDGDMQWRTVPEGLIWRDYEAVA</sequence>
<organism>
    <name type="scientific">Aspergillus ruber (strain CBS 135680)</name>
    <dbReference type="NCBI Taxonomy" id="1388766"/>
    <lineage>
        <taxon>Eukaryota</taxon>
        <taxon>Fungi</taxon>
        <taxon>Dikarya</taxon>
        <taxon>Ascomycota</taxon>
        <taxon>Pezizomycotina</taxon>
        <taxon>Eurotiomycetes</taxon>
        <taxon>Eurotiomycetidae</taxon>
        <taxon>Eurotiales</taxon>
        <taxon>Aspergillaceae</taxon>
        <taxon>Aspergillus</taxon>
        <taxon>Aspergillus subgen. Aspergillus</taxon>
    </lineage>
</organism>
<proteinExistence type="evidence at protein level"/>
<dbReference type="EC" id="1.-.-.-" evidence="3"/>
<dbReference type="EMBL" id="KK088422">
    <property type="protein sequence ID" value="EYE95339.1"/>
    <property type="molecule type" value="Genomic_DNA"/>
</dbReference>
<dbReference type="SMR" id="A0A017SFB8"/>
<dbReference type="STRING" id="1388766.A0A017SFB8"/>
<dbReference type="HOGENOM" id="CLU_001570_2_1_1"/>
<dbReference type="OrthoDB" id="1103324at2759"/>
<dbReference type="Proteomes" id="UP000019804">
    <property type="component" value="Unassembled WGS sequence"/>
</dbReference>
<dbReference type="GO" id="GO:0016020">
    <property type="term" value="C:membrane"/>
    <property type="evidence" value="ECO:0007669"/>
    <property type="project" value="UniProtKB-SubCell"/>
</dbReference>
<dbReference type="GO" id="GO:0020037">
    <property type="term" value="F:heme binding"/>
    <property type="evidence" value="ECO:0007669"/>
    <property type="project" value="InterPro"/>
</dbReference>
<dbReference type="GO" id="GO:0005506">
    <property type="term" value="F:iron ion binding"/>
    <property type="evidence" value="ECO:0007669"/>
    <property type="project" value="InterPro"/>
</dbReference>
<dbReference type="GO" id="GO:0004497">
    <property type="term" value="F:monooxygenase activity"/>
    <property type="evidence" value="ECO:0007669"/>
    <property type="project" value="UniProtKB-KW"/>
</dbReference>
<dbReference type="GO" id="GO:0016705">
    <property type="term" value="F:oxidoreductase activity, acting on paired donors, with incorporation or reduction of molecular oxygen"/>
    <property type="evidence" value="ECO:0007669"/>
    <property type="project" value="InterPro"/>
</dbReference>
<dbReference type="CDD" id="cd11065">
    <property type="entry name" value="CYP64-like"/>
    <property type="match status" value="1"/>
</dbReference>
<dbReference type="Gene3D" id="1.10.630.10">
    <property type="entry name" value="Cytochrome P450"/>
    <property type="match status" value="1"/>
</dbReference>
<dbReference type="InterPro" id="IPR001128">
    <property type="entry name" value="Cyt_P450"/>
</dbReference>
<dbReference type="InterPro" id="IPR002401">
    <property type="entry name" value="Cyt_P450_E_grp-I"/>
</dbReference>
<dbReference type="InterPro" id="IPR036396">
    <property type="entry name" value="Cyt_P450_sf"/>
</dbReference>
<dbReference type="InterPro" id="IPR050364">
    <property type="entry name" value="Cytochrome_P450_fung"/>
</dbReference>
<dbReference type="PANTHER" id="PTHR46300:SF2">
    <property type="entry name" value="CYTOCHROME P450 MONOOXYGENASE ALNH-RELATED"/>
    <property type="match status" value="1"/>
</dbReference>
<dbReference type="PANTHER" id="PTHR46300">
    <property type="entry name" value="P450, PUTATIVE (EUROFUNG)-RELATED-RELATED"/>
    <property type="match status" value="1"/>
</dbReference>
<dbReference type="Pfam" id="PF00067">
    <property type="entry name" value="p450"/>
    <property type="match status" value="1"/>
</dbReference>
<dbReference type="PRINTS" id="PR00463">
    <property type="entry name" value="EP450I"/>
</dbReference>
<dbReference type="SUPFAM" id="SSF48264">
    <property type="entry name" value="Cytochrome P450"/>
    <property type="match status" value="1"/>
</dbReference>
<feature type="chain" id="PRO_5001496120" description="Cytochrome P450 monooxygenase fogE">
    <location>
        <begin position="1"/>
        <end position="538"/>
    </location>
</feature>
<feature type="transmembrane region" description="Helical" evidence="2">
    <location>
        <begin position="4"/>
        <end position="24"/>
    </location>
</feature>
<feature type="binding site" description="axial binding residue" evidence="1">
    <location>
        <position position="437"/>
    </location>
    <ligand>
        <name>heme</name>
        <dbReference type="ChEBI" id="CHEBI:30413"/>
    </ligand>
    <ligandPart>
        <name>Fe</name>
        <dbReference type="ChEBI" id="CHEBI:18248"/>
    </ligandPart>
</feature>
<keyword id="KW-0349">Heme</keyword>
<keyword id="KW-0408">Iron</keyword>
<keyword id="KW-0472">Membrane</keyword>
<keyword id="KW-0479">Metal-binding</keyword>
<keyword id="KW-0503">Monooxygenase</keyword>
<keyword id="KW-0560">Oxidoreductase</keyword>
<keyword id="KW-1185">Reference proteome</keyword>
<keyword id="KW-0812">Transmembrane</keyword>
<keyword id="KW-1133">Transmembrane helix</keyword>
<name>FOGE_ASPRC</name>
<accession>A0A017SFB8</accession>